<proteinExistence type="inferred from homology"/>
<feature type="chain" id="PRO_0000306652" description="Small ribosomal subunit protein uS13">
    <location>
        <begin position="1"/>
        <end position="124"/>
    </location>
</feature>
<feature type="region of interest" description="Disordered" evidence="2">
    <location>
        <begin position="94"/>
        <end position="124"/>
    </location>
</feature>
<protein>
    <recommendedName>
        <fullName evidence="1">Small ribosomal subunit protein uS13</fullName>
    </recommendedName>
    <alternativeName>
        <fullName evidence="3">30S ribosomal protein S13</fullName>
    </alternativeName>
</protein>
<reference key="1">
    <citation type="journal article" date="2008" name="PLoS ONE">
        <title>Genetic basis of virulence attenuation revealed by comparative genomic analysis of Mycobacterium tuberculosis strain H37Ra versus H37Rv.</title>
        <authorList>
            <person name="Zheng H."/>
            <person name="Lu L."/>
            <person name="Wang B."/>
            <person name="Pu S."/>
            <person name="Zhang X."/>
            <person name="Zhu G."/>
            <person name="Shi W."/>
            <person name="Zhang L."/>
            <person name="Wang H."/>
            <person name="Wang S."/>
            <person name="Zhao G."/>
            <person name="Zhang Y."/>
        </authorList>
    </citation>
    <scope>NUCLEOTIDE SEQUENCE [LARGE SCALE GENOMIC DNA]</scope>
    <source>
        <strain>ATCC 25177 / H37Ra</strain>
    </source>
</reference>
<gene>
    <name evidence="1" type="primary">rpsM</name>
    <name type="ordered locus">MRA_3501</name>
</gene>
<keyword id="KW-1185">Reference proteome</keyword>
<keyword id="KW-0687">Ribonucleoprotein</keyword>
<keyword id="KW-0689">Ribosomal protein</keyword>
<keyword id="KW-0694">RNA-binding</keyword>
<keyword id="KW-0699">rRNA-binding</keyword>
<keyword id="KW-0820">tRNA-binding</keyword>
<sequence>MARLVGVDLPRDKRMEVALTYIFGIGRTRSNEILAATGIDRDLRTRDLTEEQLIHLRDYIEANLKVEGDLRREVQADIRRKIEIGCYQGLRHRRGMPVRGQRTKTNARTRKGPKRTIAGKKKAR</sequence>
<organism>
    <name type="scientific">Mycobacterium tuberculosis (strain ATCC 25177 / H37Ra)</name>
    <dbReference type="NCBI Taxonomy" id="419947"/>
    <lineage>
        <taxon>Bacteria</taxon>
        <taxon>Bacillati</taxon>
        <taxon>Actinomycetota</taxon>
        <taxon>Actinomycetes</taxon>
        <taxon>Mycobacteriales</taxon>
        <taxon>Mycobacteriaceae</taxon>
        <taxon>Mycobacterium</taxon>
        <taxon>Mycobacterium tuberculosis complex</taxon>
    </lineage>
</organism>
<name>RS13_MYCTA</name>
<evidence type="ECO:0000255" key="1">
    <source>
        <dbReference type="HAMAP-Rule" id="MF_01315"/>
    </source>
</evidence>
<evidence type="ECO:0000256" key="2">
    <source>
        <dbReference type="SAM" id="MobiDB-lite"/>
    </source>
</evidence>
<evidence type="ECO:0000305" key="3"/>
<dbReference type="EMBL" id="CP000611">
    <property type="protein sequence ID" value="ABQ75286.1"/>
    <property type="molecule type" value="Genomic_DNA"/>
</dbReference>
<dbReference type="RefSeq" id="WP_003418360.1">
    <property type="nucleotide sequence ID" value="NZ_CP016972.1"/>
</dbReference>
<dbReference type="SMR" id="A5U8D6"/>
<dbReference type="GeneID" id="45427449"/>
<dbReference type="KEGG" id="mra:MRA_3501"/>
<dbReference type="eggNOG" id="COG0099">
    <property type="taxonomic scope" value="Bacteria"/>
</dbReference>
<dbReference type="HOGENOM" id="CLU_103849_1_2_11"/>
<dbReference type="Proteomes" id="UP000001988">
    <property type="component" value="Chromosome"/>
</dbReference>
<dbReference type="GO" id="GO:0005829">
    <property type="term" value="C:cytosol"/>
    <property type="evidence" value="ECO:0007669"/>
    <property type="project" value="TreeGrafter"/>
</dbReference>
<dbReference type="GO" id="GO:0015935">
    <property type="term" value="C:small ribosomal subunit"/>
    <property type="evidence" value="ECO:0007669"/>
    <property type="project" value="TreeGrafter"/>
</dbReference>
<dbReference type="GO" id="GO:0019843">
    <property type="term" value="F:rRNA binding"/>
    <property type="evidence" value="ECO:0007669"/>
    <property type="project" value="UniProtKB-UniRule"/>
</dbReference>
<dbReference type="GO" id="GO:0003735">
    <property type="term" value="F:structural constituent of ribosome"/>
    <property type="evidence" value="ECO:0007669"/>
    <property type="project" value="InterPro"/>
</dbReference>
<dbReference type="GO" id="GO:0000049">
    <property type="term" value="F:tRNA binding"/>
    <property type="evidence" value="ECO:0007669"/>
    <property type="project" value="UniProtKB-UniRule"/>
</dbReference>
<dbReference type="GO" id="GO:0006412">
    <property type="term" value="P:translation"/>
    <property type="evidence" value="ECO:0007669"/>
    <property type="project" value="UniProtKB-UniRule"/>
</dbReference>
<dbReference type="FunFam" id="1.10.8.50:FF:000001">
    <property type="entry name" value="30S ribosomal protein S13"/>
    <property type="match status" value="1"/>
</dbReference>
<dbReference type="FunFam" id="4.10.910.10:FF:000001">
    <property type="entry name" value="30S ribosomal protein S13"/>
    <property type="match status" value="1"/>
</dbReference>
<dbReference type="Gene3D" id="1.10.8.50">
    <property type="match status" value="1"/>
</dbReference>
<dbReference type="Gene3D" id="4.10.910.10">
    <property type="entry name" value="30s ribosomal protein s13, domain 2"/>
    <property type="match status" value="1"/>
</dbReference>
<dbReference type="HAMAP" id="MF_01315">
    <property type="entry name" value="Ribosomal_uS13"/>
    <property type="match status" value="1"/>
</dbReference>
<dbReference type="InterPro" id="IPR027437">
    <property type="entry name" value="Rbsml_uS13_C"/>
</dbReference>
<dbReference type="InterPro" id="IPR001892">
    <property type="entry name" value="Ribosomal_uS13"/>
</dbReference>
<dbReference type="InterPro" id="IPR010979">
    <property type="entry name" value="Ribosomal_uS13-like_H2TH"/>
</dbReference>
<dbReference type="InterPro" id="IPR019980">
    <property type="entry name" value="Ribosomal_uS13_bac-type"/>
</dbReference>
<dbReference type="InterPro" id="IPR018269">
    <property type="entry name" value="Ribosomal_uS13_CS"/>
</dbReference>
<dbReference type="NCBIfam" id="TIGR03631">
    <property type="entry name" value="uS13_bact"/>
    <property type="match status" value="1"/>
</dbReference>
<dbReference type="PANTHER" id="PTHR10871">
    <property type="entry name" value="30S RIBOSOMAL PROTEIN S13/40S RIBOSOMAL PROTEIN S18"/>
    <property type="match status" value="1"/>
</dbReference>
<dbReference type="PANTHER" id="PTHR10871:SF1">
    <property type="entry name" value="SMALL RIBOSOMAL SUBUNIT PROTEIN US13M"/>
    <property type="match status" value="1"/>
</dbReference>
<dbReference type="Pfam" id="PF00416">
    <property type="entry name" value="Ribosomal_S13"/>
    <property type="match status" value="1"/>
</dbReference>
<dbReference type="PIRSF" id="PIRSF002134">
    <property type="entry name" value="Ribosomal_S13"/>
    <property type="match status" value="1"/>
</dbReference>
<dbReference type="SUPFAM" id="SSF46946">
    <property type="entry name" value="S13-like H2TH domain"/>
    <property type="match status" value="1"/>
</dbReference>
<dbReference type="PROSITE" id="PS00646">
    <property type="entry name" value="RIBOSOMAL_S13_1"/>
    <property type="match status" value="1"/>
</dbReference>
<dbReference type="PROSITE" id="PS50159">
    <property type="entry name" value="RIBOSOMAL_S13_2"/>
    <property type="match status" value="1"/>
</dbReference>
<comment type="function">
    <text evidence="1">Located at the top of the head of the 30S subunit, it contacts several helices of the 16S rRNA. In the 70S ribosome it contacts the 23S rRNA (bridge B1a) and protein L5 of the 50S subunit (bridge B1b), connecting the 2 subunits; these bridges are implicated in subunit movement. Contacts the tRNAs in the A and P-sites.</text>
</comment>
<comment type="subunit">
    <text evidence="1">Part of the 30S ribosomal subunit. Forms a loose heterodimer with protein S19. Forms two bridges to the 50S subunit in the 70S ribosome.</text>
</comment>
<comment type="similarity">
    <text evidence="1">Belongs to the universal ribosomal protein uS13 family.</text>
</comment>
<accession>A5U8D6</accession>